<sequence length="873" mass="100777">MANITPMMQQYLKIKSEYDDCLLFFRLGDFYEMFFDDAKEASRVLEITLTKRDAKKENPIPMCGVPYHSADNYIETLINKGYKVAICEQMEDPKQTKGMVRREVVRIITPGTVMDQNGMDEKKNNYILSFIENEEFGLCYCDVSTGELKVTHFKDTATLLNEITTINPNEIVIKQALSEELKRQINMITETITVREDISDEDYDMNQLTHQLMHDTTQLLLDYIHHTQKRDLSHIEEVIEYAAVDYMKMDYYAKRNLELTESIRLKSKKGTLLWLMDETKTPMGARRLKQWIDRPLINKQQINDRLNIVEEFMDRFIERDTLRNHLNQVYDIERLVGRVSYGNVNARDLIQLKHSISEIPHIKALLNELGAQTTTQFKELEPLDDLLQILEESLVEEPPISIKDGGLFKNGFNAQLDEYLEASKNGKTWLAELQAKERERTGIKSLKISFNKVFGYFIEITRANLNNFQPEAFGYNRKQTLSNAERFITDELKEKEDIILGAEDKAVELEYELFVKLREHIKTYTERLQKQAKIISELDCLQSFAEIAQKYNYVKPTFSDDKVLHLENSRHPVVERVMDYNDYVPNDCHLDDETFIYLITGPNMSGKSTYMRQVAIISIMAQMGAYVPCDSATLPIFDQIFTRIGAADDLVSGKSTFMVEMLEAQKALTYATENSLIIFDEIGRGTSTYDGLALAQAMIEYVAQTSHAKTLFSTHYHELTSLDQMLKCLKNVHVAANEYQGELIFLHKVKDGAVDDSYGIQVAKLADLPNEVIDRAQVILNAFEQKPSYQLSHENTDNQQTVPSYNDFGRTEEEQSVIETHTSNHNYEQATFDLFDGYNQQSEVECQIRELNLSNMTPLEALIKLNELQSQLK</sequence>
<accession>Q8CPF0</accession>
<protein>
    <recommendedName>
        <fullName evidence="1">DNA mismatch repair protein MutS</fullName>
    </recommendedName>
</protein>
<comment type="function">
    <text evidence="1">This protein is involved in the repair of mismatches in DNA. It is possible that it carries out the mismatch recognition step. This protein has a weak ATPase activity.</text>
</comment>
<comment type="similarity">
    <text evidence="1">Belongs to the DNA mismatch repair MutS family.</text>
</comment>
<organism>
    <name type="scientific">Staphylococcus epidermidis (strain ATCC 12228 / FDA PCI 1200)</name>
    <dbReference type="NCBI Taxonomy" id="176280"/>
    <lineage>
        <taxon>Bacteria</taxon>
        <taxon>Bacillati</taxon>
        <taxon>Bacillota</taxon>
        <taxon>Bacilli</taxon>
        <taxon>Bacillales</taxon>
        <taxon>Staphylococcaceae</taxon>
        <taxon>Staphylococcus</taxon>
    </lineage>
</organism>
<gene>
    <name evidence="1" type="primary">mutS</name>
    <name type="ordered locus">SE_0974</name>
</gene>
<reference key="1">
    <citation type="journal article" date="2003" name="Mol. Microbiol.">
        <title>Genome-based analysis of virulence genes in a non-biofilm-forming Staphylococcus epidermidis strain (ATCC 12228).</title>
        <authorList>
            <person name="Zhang Y.-Q."/>
            <person name="Ren S.-X."/>
            <person name="Li H.-L."/>
            <person name="Wang Y.-X."/>
            <person name="Fu G."/>
            <person name="Yang J."/>
            <person name="Qin Z.-Q."/>
            <person name="Miao Y.-G."/>
            <person name="Wang W.-Y."/>
            <person name="Chen R.-S."/>
            <person name="Shen Y."/>
            <person name="Chen Z."/>
            <person name="Yuan Z.-H."/>
            <person name="Zhao G.-P."/>
            <person name="Qu D."/>
            <person name="Danchin A."/>
            <person name="Wen Y.-M."/>
        </authorList>
    </citation>
    <scope>NUCLEOTIDE SEQUENCE [LARGE SCALE GENOMIC DNA]</scope>
    <source>
        <strain>ATCC 12228 / FDA PCI 1200</strain>
    </source>
</reference>
<feature type="chain" id="PRO_0000115142" description="DNA mismatch repair protein MutS">
    <location>
        <begin position="1"/>
        <end position="873"/>
    </location>
</feature>
<feature type="binding site" evidence="1">
    <location>
        <begin position="601"/>
        <end position="608"/>
    </location>
    <ligand>
        <name>ATP</name>
        <dbReference type="ChEBI" id="CHEBI:30616"/>
    </ligand>
</feature>
<keyword id="KW-0067">ATP-binding</keyword>
<keyword id="KW-0227">DNA damage</keyword>
<keyword id="KW-0234">DNA repair</keyword>
<keyword id="KW-0238">DNA-binding</keyword>
<keyword id="KW-0547">Nucleotide-binding</keyword>
<name>MUTS_STAES</name>
<dbReference type="EMBL" id="AE015929">
    <property type="protein sequence ID" value="AAO04571.1"/>
    <property type="molecule type" value="Genomic_DNA"/>
</dbReference>
<dbReference type="RefSeq" id="NP_764529.1">
    <property type="nucleotide sequence ID" value="NC_004461.1"/>
</dbReference>
<dbReference type="RefSeq" id="WP_002456219.1">
    <property type="nucleotide sequence ID" value="NZ_WBME01000001.1"/>
</dbReference>
<dbReference type="SMR" id="Q8CPF0"/>
<dbReference type="KEGG" id="sep:SE_0974"/>
<dbReference type="PATRIC" id="fig|176280.10.peg.948"/>
<dbReference type="eggNOG" id="COG0249">
    <property type="taxonomic scope" value="Bacteria"/>
</dbReference>
<dbReference type="HOGENOM" id="CLU_002472_4_0_9"/>
<dbReference type="OrthoDB" id="9802448at2"/>
<dbReference type="Proteomes" id="UP000001411">
    <property type="component" value="Chromosome"/>
</dbReference>
<dbReference type="GO" id="GO:0005829">
    <property type="term" value="C:cytosol"/>
    <property type="evidence" value="ECO:0007669"/>
    <property type="project" value="TreeGrafter"/>
</dbReference>
<dbReference type="GO" id="GO:0005524">
    <property type="term" value="F:ATP binding"/>
    <property type="evidence" value="ECO:0007669"/>
    <property type="project" value="UniProtKB-UniRule"/>
</dbReference>
<dbReference type="GO" id="GO:0140664">
    <property type="term" value="F:ATP-dependent DNA damage sensor activity"/>
    <property type="evidence" value="ECO:0007669"/>
    <property type="project" value="InterPro"/>
</dbReference>
<dbReference type="GO" id="GO:0003684">
    <property type="term" value="F:damaged DNA binding"/>
    <property type="evidence" value="ECO:0007669"/>
    <property type="project" value="UniProtKB-UniRule"/>
</dbReference>
<dbReference type="GO" id="GO:0030983">
    <property type="term" value="F:mismatched DNA binding"/>
    <property type="evidence" value="ECO:0007669"/>
    <property type="project" value="InterPro"/>
</dbReference>
<dbReference type="GO" id="GO:0006298">
    <property type="term" value="P:mismatch repair"/>
    <property type="evidence" value="ECO:0007669"/>
    <property type="project" value="UniProtKB-UniRule"/>
</dbReference>
<dbReference type="CDD" id="cd03284">
    <property type="entry name" value="ABC_MutS1"/>
    <property type="match status" value="1"/>
</dbReference>
<dbReference type="FunFam" id="1.10.1420.10:FF:000007">
    <property type="entry name" value="DNA mismatch repair protein MutS"/>
    <property type="match status" value="1"/>
</dbReference>
<dbReference type="FunFam" id="3.40.1170.10:FF:000001">
    <property type="entry name" value="DNA mismatch repair protein MutS"/>
    <property type="match status" value="1"/>
</dbReference>
<dbReference type="FunFam" id="3.40.50.300:FF:000896">
    <property type="entry name" value="DNA mismatch repair protein MutS"/>
    <property type="match status" value="1"/>
</dbReference>
<dbReference type="Gene3D" id="1.10.1420.10">
    <property type="match status" value="2"/>
</dbReference>
<dbReference type="Gene3D" id="3.40.1170.10">
    <property type="entry name" value="DNA repair protein MutS, domain I"/>
    <property type="match status" value="1"/>
</dbReference>
<dbReference type="Gene3D" id="3.30.420.110">
    <property type="entry name" value="MutS, connector domain"/>
    <property type="match status" value="1"/>
</dbReference>
<dbReference type="Gene3D" id="3.40.50.300">
    <property type="entry name" value="P-loop containing nucleotide triphosphate hydrolases"/>
    <property type="match status" value="1"/>
</dbReference>
<dbReference type="HAMAP" id="MF_00096">
    <property type="entry name" value="MutS"/>
    <property type="match status" value="1"/>
</dbReference>
<dbReference type="InterPro" id="IPR005748">
    <property type="entry name" value="DNA_mismatch_repair_MutS"/>
</dbReference>
<dbReference type="InterPro" id="IPR007695">
    <property type="entry name" value="DNA_mismatch_repair_MutS-lik_N"/>
</dbReference>
<dbReference type="InterPro" id="IPR017261">
    <property type="entry name" value="DNA_mismatch_repair_MutS/MSH"/>
</dbReference>
<dbReference type="InterPro" id="IPR000432">
    <property type="entry name" value="DNA_mismatch_repair_MutS_C"/>
</dbReference>
<dbReference type="InterPro" id="IPR007861">
    <property type="entry name" value="DNA_mismatch_repair_MutS_clamp"/>
</dbReference>
<dbReference type="InterPro" id="IPR007696">
    <property type="entry name" value="DNA_mismatch_repair_MutS_core"/>
</dbReference>
<dbReference type="InterPro" id="IPR016151">
    <property type="entry name" value="DNA_mismatch_repair_MutS_N"/>
</dbReference>
<dbReference type="InterPro" id="IPR036187">
    <property type="entry name" value="DNA_mismatch_repair_MutS_sf"/>
</dbReference>
<dbReference type="InterPro" id="IPR007860">
    <property type="entry name" value="DNA_mmatch_repair_MutS_con_dom"/>
</dbReference>
<dbReference type="InterPro" id="IPR045076">
    <property type="entry name" value="MutS"/>
</dbReference>
<dbReference type="InterPro" id="IPR036678">
    <property type="entry name" value="MutS_con_dom_sf"/>
</dbReference>
<dbReference type="InterPro" id="IPR027417">
    <property type="entry name" value="P-loop_NTPase"/>
</dbReference>
<dbReference type="NCBIfam" id="TIGR01070">
    <property type="entry name" value="mutS1"/>
    <property type="match status" value="1"/>
</dbReference>
<dbReference type="NCBIfam" id="NF003810">
    <property type="entry name" value="PRK05399.1"/>
    <property type="match status" value="1"/>
</dbReference>
<dbReference type="PANTHER" id="PTHR11361:SF34">
    <property type="entry name" value="DNA MISMATCH REPAIR PROTEIN MSH1, MITOCHONDRIAL"/>
    <property type="match status" value="1"/>
</dbReference>
<dbReference type="PANTHER" id="PTHR11361">
    <property type="entry name" value="DNA MISMATCH REPAIR PROTEIN MUTS FAMILY MEMBER"/>
    <property type="match status" value="1"/>
</dbReference>
<dbReference type="Pfam" id="PF01624">
    <property type="entry name" value="MutS_I"/>
    <property type="match status" value="1"/>
</dbReference>
<dbReference type="Pfam" id="PF05188">
    <property type="entry name" value="MutS_II"/>
    <property type="match status" value="1"/>
</dbReference>
<dbReference type="Pfam" id="PF05192">
    <property type="entry name" value="MutS_III"/>
    <property type="match status" value="1"/>
</dbReference>
<dbReference type="Pfam" id="PF05190">
    <property type="entry name" value="MutS_IV"/>
    <property type="match status" value="1"/>
</dbReference>
<dbReference type="Pfam" id="PF00488">
    <property type="entry name" value="MutS_V"/>
    <property type="match status" value="1"/>
</dbReference>
<dbReference type="PIRSF" id="PIRSF037677">
    <property type="entry name" value="DNA_mis_repair_Msh6"/>
    <property type="match status" value="1"/>
</dbReference>
<dbReference type="SMART" id="SM00534">
    <property type="entry name" value="MUTSac"/>
    <property type="match status" value="1"/>
</dbReference>
<dbReference type="SMART" id="SM00533">
    <property type="entry name" value="MUTSd"/>
    <property type="match status" value="1"/>
</dbReference>
<dbReference type="SUPFAM" id="SSF55271">
    <property type="entry name" value="DNA repair protein MutS, domain I"/>
    <property type="match status" value="1"/>
</dbReference>
<dbReference type="SUPFAM" id="SSF53150">
    <property type="entry name" value="DNA repair protein MutS, domain II"/>
    <property type="match status" value="1"/>
</dbReference>
<dbReference type="SUPFAM" id="SSF48334">
    <property type="entry name" value="DNA repair protein MutS, domain III"/>
    <property type="match status" value="1"/>
</dbReference>
<dbReference type="SUPFAM" id="SSF52540">
    <property type="entry name" value="P-loop containing nucleoside triphosphate hydrolases"/>
    <property type="match status" value="1"/>
</dbReference>
<dbReference type="PROSITE" id="PS00486">
    <property type="entry name" value="DNA_MISMATCH_REPAIR_2"/>
    <property type="match status" value="1"/>
</dbReference>
<proteinExistence type="inferred from homology"/>
<evidence type="ECO:0000255" key="1">
    <source>
        <dbReference type="HAMAP-Rule" id="MF_00096"/>
    </source>
</evidence>